<reference key="1">
    <citation type="journal article" date="2006" name="Proc. Natl. Acad. Sci. U.S.A.">
        <title>Comparative genomics of the lactic acid bacteria.</title>
        <authorList>
            <person name="Makarova K.S."/>
            <person name="Slesarev A."/>
            <person name="Wolf Y.I."/>
            <person name="Sorokin A."/>
            <person name="Mirkin B."/>
            <person name="Koonin E.V."/>
            <person name="Pavlov A."/>
            <person name="Pavlova N."/>
            <person name="Karamychev V."/>
            <person name="Polouchine N."/>
            <person name="Shakhova V."/>
            <person name="Grigoriev I."/>
            <person name="Lou Y."/>
            <person name="Rohksar D."/>
            <person name="Lucas S."/>
            <person name="Huang K."/>
            <person name="Goodstein D.M."/>
            <person name="Hawkins T."/>
            <person name="Plengvidhya V."/>
            <person name="Welker D."/>
            <person name="Hughes J."/>
            <person name="Goh Y."/>
            <person name="Benson A."/>
            <person name="Baldwin K."/>
            <person name="Lee J.-H."/>
            <person name="Diaz-Muniz I."/>
            <person name="Dosti B."/>
            <person name="Smeianov V."/>
            <person name="Wechter W."/>
            <person name="Barabote R."/>
            <person name="Lorca G."/>
            <person name="Altermann E."/>
            <person name="Barrangou R."/>
            <person name="Ganesan B."/>
            <person name="Xie Y."/>
            <person name="Rawsthorne H."/>
            <person name="Tamir D."/>
            <person name="Parker C."/>
            <person name="Breidt F."/>
            <person name="Broadbent J.R."/>
            <person name="Hutkins R."/>
            <person name="O'Sullivan D."/>
            <person name="Steele J."/>
            <person name="Unlu G."/>
            <person name="Saier M.H. Jr."/>
            <person name="Klaenhammer T."/>
            <person name="Richardson P."/>
            <person name="Kozyavkin S."/>
            <person name="Weimer B.C."/>
            <person name="Mills D.A."/>
        </authorList>
    </citation>
    <scope>NUCLEOTIDE SEQUENCE [LARGE SCALE GENOMIC DNA]</scope>
    <source>
        <strain>ATCC BAA-491 / LMD-9</strain>
    </source>
</reference>
<keyword id="KW-0687">Ribonucleoprotein</keyword>
<keyword id="KW-0689">Ribosomal protein</keyword>
<keyword id="KW-0694">RNA-binding</keyword>
<keyword id="KW-0699">rRNA-binding</keyword>
<protein>
    <recommendedName>
        <fullName evidence="1">Large ribosomal subunit protein bL21</fullName>
    </recommendedName>
    <alternativeName>
        <fullName evidence="2">50S ribosomal protein L21</fullName>
    </alternativeName>
</protein>
<comment type="function">
    <text evidence="1">This protein binds to 23S rRNA in the presence of protein L20.</text>
</comment>
<comment type="subunit">
    <text evidence="1">Part of the 50S ribosomal subunit. Contacts protein L20.</text>
</comment>
<comment type="similarity">
    <text evidence="1">Belongs to the bacterial ribosomal protein bL21 family.</text>
</comment>
<gene>
    <name evidence="1" type="primary">rplU</name>
    <name type="ordered locus">STER_0455</name>
</gene>
<sequence>MSTYAIIKTGGKQVKVEVGQAIYVEKINAEAGSEVTFNEVVLVGGDKTVVGTPVVEGATVVGTIEKQGKQKKVVTFKYKPKKGSHRKQGHRQPYTKVVINAINA</sequence>
<dbReference type="EMBL" id="CP000419">
    <property type="protein sequence ID" value="ABJ65739.1"/>
    <property type="molecule type" value="Genomic_DNA"/>
</dbReference>
<dbReference type="RefSeq" id="WP_002885597.1">
    <property type="nucleotide sequence ID" value="NZ_CP086001.1"/>
</dbReference>
<dbReference type="SMR" id="Q03M33"/>
<dbReference type="GeneID" id="93791586"/>
<dbReference type="KEGG" id="ste:STER_0455"/>
<dbReference type="HOGENOM" id="CLU_061463_3_1_9"/>
<dbReference type="GO" id="GO:0005737">
    <property type="term" value="C:cytoplasm"/>
    <property type="evidence" value="ECO:0007669"/>
    <property type="project" value="UniProtKB-ARBA"/>
</dbReference>
<dbReference type="GO" id="GO:1990904">
    <property type="term" value="C:ribonucleoprotein complex"/>
    <property type="evidence" value="ECO:0007669"/>
    <property type="project" value="UniProtKB-KW"/>
</dbReference>
<dbReference type="GO" id="GO:0005840">
    <property type="term" value="C:ribosome"/>
    <property type="evidence" value="ECO:0007669"/>
    <property type="project" value="UniProtKB-KW"/>
</dbReference>
<dbReference type="GO" id="GO:0019843">
    <property type="term" value="F:rRNA binding"/>
    <property type="evidence" value="ECO:0007669"/>
    <property type="project" value="UniProtKB-UniRule"/>
</dbReference>
<dbReference type="GO" id="GO:0003735">
    <property type="term" value="F:structural constituent of ribosome"/>
    <property type="evidence" value="ECO:0007669"/>
    <property type="project" value="InterPro"/>
</dbReference>
<dbReference type="GO" id="GO:0006412">
    <property type="term" value="P:translation"/>
    <property type="evidence" value="ECO:0007669"/>
    <property type="project" value="UniProtKB-UniRule"/>
</dbReference>
<dbReference type="HAMAP" id="MF_01363">
    <property type="entry name" value="Ribosomal_bL21"/>
    <property type="match status" value="1"/>
</dbReference>
<dbReference type="InterPro" id="IPR028909">
    <property type="entry name" value="bL21-like"/>
</dbReference>
<dbReference type="InterPro" id="IPR036164">
    <property type="entry name" value="bL21-like_sf"/>
</dbReference>
<dbReference type="InterPro" id="IPR001787">
    <property type="entry name" value="Ribosomal_bL21"/>
</dbReference>
<dbReference type="InterPro" id="IPR018258">
    <property type="entry name" value="Ribosomal_bL21_CS"/>
</dbReference>
<dbReference type="NCBIfam" id="TIGR00061">
    <property type="entry name" value="L21"/>
    <property type="match status" value="1"/>
</dbReference>
<dbReference type="PANTHER" id="PTHR21349">
    <property type="entry name" value="50S RIBOSOMAL PROTEIN L21"/>
    <property type="match status" value="1"/>
</dbReference>
<dbReference type="PANTHER" id="PTHR21349:SF0">
    <property type="entry name" value="LARGE RIBOSOMAL SUBUNIT PROTEIN BL21M"/>
    <property type="match status" value="1"/>
</dbReference>
<dbReference type="Pfam" id="PF00829">
    <property type="entry name" value="Ribosomal_L21p"/>
    <property type="match status" value="1"/>
</dbReference>
<dbReference type="SUPFAM" id="SSF141091">
    <property type="entry name" value="L21p-like"/>
    <property type="match status" value="1"/>
</dbReference>
<dbReference type="PROSITE" id="PS01169">
    <property type="entry name" value="RIBOSOMAL_L21"/>
    <property type="match status" value="1"/>
</dbReference>
<organism>
    <name type="scientific">Streptococcus thermophilus (strain ATCC BAA-491 / LMD-9)</name>
    <dbReference type="NCBI Taxonomy" id="322159"/>
    <lineage>
        <taxon>Bacteria</taxon>
        <taxon>Bacillati</taxon>
        <taxon>Bacillota</taxon>
        <taxon>Bacilli</taxon>
        <taxon>Lactobacillales</taxon>
        <taxon>Streptococcaceae</taxon>
        <taxon>Streptococcus</taxon>
    </lineage>
</organism>
<accession>Q03M33</accession>
<evidence type="ECO:0000255" key="1">
    <source>
        <dbReference type="HAMAP-Rule" id="MF_01363"/>
    </source>
</evidence>
<evidence type="ECO:0000305" key="2"/>
<proteinExistence type="inferred from homology"/>
<feature type="chain" id="PRO_1000067908" description="Large ribosomal subunit protein bL21">
    <location>
        <begin position="1"/>
        <end position="104"/>
    </location>
</feature>
<name>RL21_STRTD</name>